<feature type="signal peptide" evidence="1">
    <location>
        <begin position="1"/>
        <end position="21"/>
    </location>
</feature>
<feature type="chain" id="PRO_5000093328" description="Short neurotoxin OH-32">
    <location>
        <begin position="22"/>
        <end position="77"/>
    </location>
</feature>
<feature type="site" description="Important residue for inhibition of muscle alpha-1-beta-1-delta-epsilon (CHRNA1-CHRNB1-CHRND-CHRNE) and neuronal alpha-3-beta-2/CHRNA3-CHRNB2 nAChR" evidence="3">
    <location>
        <position position="28"/>
    </location>
</feature>
<feature type="site" description="Important residue for inhibition of muscle alpha-1-beta-1-delta-epsilon (CHRNA1-CHRNB1-CHRND-CHRNE) and neuronal alpha-3-beta-2/CHRNA3-CHRNB2 nAChR" evidence="3">
    <location>
        <position position="43"/>
    </location>
</feature>
<feature type="site" description="Key residue for inhibition of muscle alpha-1-beta-1-delta-epsilon (CHRNA1-CHRNB1-CHRND-CHRNE) nAChR" evidence="3">
    <location>
        <position position="44"/>
    </location>
</feature>
<feature type="site" description="Key residue for inhibition of muscle alpha-1-beta-1-delta-epsilon (CHRNA1-CHRNB1-CHRND-CHRNE) and important for inhibition of neuronal alpha-3-beta-2/CHRNA3-CHRNB2 nAChR" evidence="3">
    <location>
        <position position="46"/>
    </location>
</feature>
<feature type="site" description="Key residue for inhibition of muscle alpha-1-beta-1-delta-epsilon (CHRNA1-CHRNB1-CHRND-CHRNE) and important residue for inhibition of neuronal alpha-3-beta-2/CHRNA3-CHRNB2 nAChR" evidence="3">
    <location>
        <position position="48"/>
    </location>
</feature>
<feature type="site" description="Important residue for inhibition of muscle alpha-1-beta-1-delta-epsilon (CHRNA1-CHRNB1-CHRND-CHRNE) and neuronal alpha-3-beta-2/CHRNA3-CHRNB2 nAChR" evidence="3">
    <location>
        <position position="51"/>
    </location>
</feature>
<feature type="site" description="Important residue for inhibition of muscle alpha-1-beta-1-delta-epsilon (CHRNA1-CHRNB1-CHRND-CHRNE) and neuronal alpha-3-beta-2/CHRNA3-CHRNB2 nAChR" evidence="3">
    <location>
        <position position="66"/>
    </location>
</feature>
<feature type="disulfide bond" evidence="2">
    <location>
        <begin position="24"/>
        <end position="40"/>
    </location>
</feature>
<feature type="disulfide bond" evidence="2">
    <location>
        <begin position="33"/>
        <end position="58"/>
    </location>
</feature>
<feature type="disulfide bond" evidence="2">
    <location>
        <begin position="62"/>
        <end position="70"/>
    </location>
</feature>
<feature type="disulfide bond" evidence="2">
    <location>
        <begin position="71"/>
        <end position="76"/>
    </location>
</feature>
<name>3SX2_OPHHA</name>
<comment type="function">
    <text evidence="3">This three-finger toxin binds and inhibits the nicotinic acetylcholine receptor (nAChR).</text>
</comment>
<comment type="subcellular location">
    <subcellularLocation>
        <location evidence="1">Secreted</location>
    </subcellularLocation>
</comment>
<comment type="tissue specificity">
    <text evidence="5">Expressed by the venom gland.</text>
</comment>
<comment type="miscellaneous">
    <text evidence="5">Is classified as a P-type cytotoxin, since a proline residue stands at position 49 (Pro-31 in standard classification).</text>
</comment>
<comment type="similarity">
    <text evidence="5">Belongs to the three-finger toxin family. Short-chain subfamily.</text>
</comment>
<organism>
    <name type="scientific">Ophiophagus hannah</name>
    <name type="common">King cobra</name>
    <name type="synonym">Naja hannah</name>
    <dbReference type="NCBI Taxonomy" id="8665"/>
    <lineage>
        <taxon>Eukaryota</taxon>
        <taxon>Metazoa</taxon>
        <taxon>Chordata</taxon>
        <taxon>Craniata</taxon>
        <taxon>Vertebrata</taxon>
        <taxon>Euteleostomi</taxon>
        <taxon>Lepidosauria</taxon>
        <taxon>Squamata</taxon>
        <taxon>Bifurcata</taxon>
        <taxon>Unidentata</taxon>
        <taxon>Episquamata</taxon>
        <taxon>Toxicofera</taxon>
        <taxon>Serpentes</taxon>
        <taxon>Colubroidea</taxon>
        <taxon>Elapidae</taxon>
        <taxon>Elapinae</taxon>
        <taxon>Ophiophagus</taxon>
    </lineage>
</organism>
<protein>
    <recommendedName>
        <fullName evidence="4">Short neurotoxin OH-32</fullName>
    </recommendedName>
    <alternativeName>
        <fullName>Three-finger toxin</fullName>
        <shortName>3FTx</shortName>
    </alternativeName>
</protein>
<accession>Q53B50</accession>
<reference key="1">
    <citation type="journal article" date="2004" name="Toxicon">
        <title>Cloning and purification of alpha-neurotoxins from king cobra (Ophiophagus hannah).</title>
        <authorList>
            <person name="He Y.-Y."/>
            <person name="Lee W.-H."/>
            <person name="Zhang Y."/>
        </authorList>
    </citation>
    <scope>NUCLEOTIDE SEQUENCE [MRNA]</scope>
    <source>
        <tissue>Venom gland</tissue>
    </source>
</reference>
<dbReference type="EMBL" id="AY596936">
    <property type="protein sequence ID" value="AAT97258.1"/>
    <property type="molecule type" value="mRNA"/>
</dbReference>
<dbReference type="SMR" id="Q53B50"/>
<dbReference type="GO" id="GO:0005576">
    <property type="term" value="C:extracellular region"/>
    <property type="evidence" value="ECO:0007669"/>
    <property type="project" value="UniProtKB-SubCell"/>
</dbReference>
<dbReference type="GO" id="GO:0030550">
    <property type="term" value="F:acetylcholine receptor inhibitor activity"/>
    <property type="evidence" value="ECO:0007669"/>
    <property type="project" value="UniProtKB-KW"/>
</dbReference>
<dbReference type="GO" id="GO:0099106">
    <property type="term" value="F:ion channel regulator activity"/>
    <property type="evidence" value="ECO:0007669"/>
    <property type="project" value="UniProtKB-KW"/>
</dbReference>
<dbReference type="GO" id="GO:0090729">
    <property type="term" value="F:toxin activity"/>
    <property type="evidence" value="ECO:0007669"/>
    <property type="project" value="UniProtKB-KW"/>
</dbReference>
<dbReference type="CDD" id="cd00206">
    <property type="entry name" value="TFP_snake_toxin"/>
    <property type="match status" value="1"/>
</dbReference>
<dbReference type="Gene3D" id="2.10.60.10">
    <property type="entry name" value="CD59"/>
    <property type="match status" value="1"/>
</dbReference>
<dbReference type="InterPro" id="IPR003571">
    <property type="entry name" value="Snake_3FTx"/>
</dbReference>
<dbReference type="InterPro" id="IPR045860">
    <property type="entry name" value="Snake_toxin-like_sf"/>
</dbReference>
<dbReference type="InterPro" id="IPR054131">
    <property type="entry name" value="Toxin_cobra-type"/>
</dbReference>
<dbReference type="Pfam" id="PF21947">
    <property type="entry name" value="Toxin_cobra-type"/>
    <property type="match status" value="1"/>
</dbReference>
<dbReference type="SUPFAM" id="SSF57302">
    <property type="entry name" value="Snake toxin-like"/>
    <property type="match status" value="1"/>
</dbReference>
<keyword id="KW-0008">Acetylcholine receptor inhibiting toxin</keyword>
<keyword id="KW-1015">Disulfide bond</keyword>
<keyword id="KW-0872">Ion channel impairing toxin</keyword>
<keyword id="KW-0528">Neurotoxin</keyword>
<keyword id="KW-0629">Postsynaptic neurotoxin</keyword>
<keyword id="KW-0964">Secreted</keyword>
<keyword id="KW-0732">Signal</keyword>
<keyword id="KW-0800">Toxin</keyword>
<sequence>MKNLLLTFLVVTIVCLDLGYTLICNRVHGLQTCEPAHKFCFSKTVMPFPNHPLTLMGCTYSCPTERNAVCCSTDKCN</sequence>
<evidence type="ECO:0000250" key="1"/>
<evidence type="ECO:0000250" key="2">
    <source>
        <dbReference type="UniProtKB" id="P0DKR6"/>
    </source>
</evidence>
<evidence type="ECO:0000250" key="3">
    <source>
        <dbReference type="UniProtKB" id="P83302"/>
    </source>
</evidence>
<evidence type="ECO:0000303" key="4">
    <source>
    </source>
</evidence>
<evidence type="ECO:0000305" key="5"/>
<proteinExistence type="inferred from homology"/>